<proteinExistence type="inferred from homology"/>
<evidence type="ECO:0000255" key="1">
    <source>
        <dbReference type="HAMAP-Rule" id="MF_01637"/>
    </source>
</evidence>
<sequence length="191" mass="20998">MIRISDAAQAHFAKLLANQEEGTQIRVFVINPGTPNAECGVSYCPPDAVEATDTALKFDLLTAYVDELSAPYLEDAEIDFVTDQLGSQLTLKAPNAKMRKVADDAPLMERVEYMLQSQINPQLAGHGGRVSLMEITEDGYAILQFGGGCNGCSMVDVTLKEGIEKQLLNEFPELKGVRDLTEHQRGEHSYY</sequence>
<gene>
    <name evidence="1" type="primary">nfuA</name>
    <name type="ordered locus">E2348C_3659</name>
</gene>
<feature type="chain" id="PRO_1000186742" description="Fe/S biogenesis protein NfuA">
    <location>
        <begin position="1"/>
        <end position="191"/>
    </location>
</feature>
<feature type="binding site" evidence="1">
    <location>
        <position position="149"/>
    </location>
    <ligand>
        <name>[4Fe-4S] cluster</name>
        <dbReference type="ChEBI" id="CHEBI:49883"/>
    </ligand>
</feature>
<feature type="binding site" evidence="1">
    <location>
        <position position="152"/>
    </location>
    <ligand>
        <name>[4Fe-4S] cluster</name>
        <dbReference type="ChEBI" id="CHEBI:49883"/>
    </ligand>
</feature>
<name>NFUA_ECO27</name>
<keyword id="KW-0004">4Fe-4S</keyword>
<keyword id="KW-0408">Iron</keyword>
<keyword id="KW-0411">Iron-sulfur</keyword>
<keyword id="KW-0479">Metal-binding</keyword>
<keyword id="KW-1185">Reference proteome</keyword>
<dbReference type="EMBL" id="FM180568">
    <property type="protein sequence ID" value="CAS11207.1"/>
    <property type="molecule type" value="Genomic_DNA"/>
</dbReference>
<dbReference type="RefSeq" id="WP_000619389.1">
    <property type="nucleotide sequence ID" value="NC_011601.1"/>
</dbReference>
<dbReference type="SMR" id="B7UKB9"/>
<dbReference type="GeneID" id="93778582"/>
<dbReference type="KEGG" id="ecg:E2348C_3659"/>
<dbReference type="HOGENOM" id="CLU_094569_0_0_6"/>
<dbReference type="Proteomes" id="UP000008205">
    <property type="component" value="Chromosome"/>
</dbReference>
<dbReference type="GO" id="GO:0051539">
    <property type="term" value="F:4 iron, 4 sulfur cluster binding"/>
    <property type="evidence" value="ECO:0007669"/>
    <property type="project" value="UniProtKB-UniRule"/>
</dbReference>
<dbReference type="GO" id="GO:0005506">
    <property type="term" value="F:iron ion binding"/>
    <property type="evidence" value="ECO:0007669"/>
    <property type="project" value="InterPro"/>
</dbReference>
<dbReference type="GO" id="GO:0016226">
    <property type="term" value="P:iron-sulfur cluster assembly"/>
    <property type="evidence" value="ECO:0007669"/>
    <property type="project" value="UniProtKB-UniRule"/>
</dbReference>
<dbReference type="GO" id="GO:0051604">
    <property type="term" value="P:protein maturation"/>
    <property type="evidence" value="ECO:0007669"/>
    <property type="project" value="UniProtKB-UniRule"/>
</dbReference>
<dbReference type="FunFam" id="2.60.300.12:FF:000004">
    <property type="entry name" value="Fe/S biogenesis protein NfuA"/>
    <property type="match status" value="1"/>
</dbReference>
<dbReference type="FunFam" id="3.30.300.130:FF:000002">
    <property type="entry name" value="Fe/S biogenesis protein NfuA"/>
    <property type="match status" value="1"/>
</dbReference>
<dbReference type="Gene3D" id="3.30.300.130">
    <property type="entry name" value="Fe-S cluster assembly (FSCA)"/>
    <property type="match status" value="1"/>
</dbReference>
<dbReference type="Gene3D" id="2.60.300.12">
    <property type="entry name" value="HesB-like domain"/>
    <property type="match status" value="1"/>
</dbReference>
<dbReference type="HAMAP" id="MF_01637">
    <property type="entry name" value="Fe_S_biogen_NfuA"/>
    <property type="match status" value="1"/>
</dbReference>
<dbReference type="InterPro" id="IPR017726">
    <property type="entry name" value="Fe/S_biogenesis_protein_NfuA"/>
</dbReference>
<dbReference type="InterPro" id="IPR000361">
    <property type="entry name" value="FeS_biogenesis"/>
</dbReference>
<dbReference type="InterPro" id="IPR034904">
    <property type="entry name" value="FSCA_dom_sf"/>
</dbReference>
<dbReference type="InterPro" id="IPR035903">
    <property type="entry name" value="HesB-like_dom_sf"/>
</dbReference>
<dbReference type="InterPro" id="IPR001075">
    <property type="entry name" value="NIF_FeS_clus_asmbl_NifU_C"/>
</dbReference>
<dbReference type="NCBIfam" id="NF008392">
    <property type="entry name" value="PRK11190.1"/>
    <property type="match status" value="1"/>
</dbReference>
<dbReference type="NCBIfam" id="TIGR03341">
    <property type="entry name" value="YhgI_GntY"/>
    <property type="match status" value="1"/>
</dbReference>
<dbReference type="PANTHER" id="PTHR11178:SF51">
    <property type="entry name" value="FE_S BIOGENESIS PROTEIN NFUA"/>
    <property type="match status" value="1"/>
</dbReference>
<dbReference type="PANTHER" id="PTHR11178">
    <property type="entry name" value="IRON-SULFUR CLUSTER SCAFFOLD PROTEIN NFU-RELATED"/>
    <property type="match status" value="1"/>
</dbReference>
<dbReference type="Pfam" id="PF01521">
    <property type="entry name" value="Fe-S_biosyn"/>
    <property type="match status" value="1"/>
</dbReference>
<dbReference type="Pfam" id="PF01106">
    <property type="entry name" value="NifU"/>
    <property type="match status" value="1"/>
</dbReference>
<dbReference type="SUPFAM" id="SSF117916">
    <property type="entry name" value="Fe-S cluster assembly (FSCA) domain-like"/>
    <property type="match status" value="1"/>
</dbReference>
<dbReference type="SUPFAM" id="SSF89360">
    <property type="entry name" value="HesB-like domain"/>
    <property type="match status" value="1"/>
</dbReference>
<comment type="function">
    <text evidence="1">Involved in iron-sulfur cluster biogenesis. Binds a 4Fe-4S cluster, can transfer this cluster to apoproteins, and thereby intervenes in the maturation of Fe/S proteins. Could also act as a scaffold/chaperone for damaged Fe/S proteins.</text>
</comment>
<comment type="cofactor">
    <cofactor evidence="1">
        <name>[4Fe-4S] cluster</name>
        <dbReference type="ChEBI" id="CHEBI:49883"/>
    </cofactor>
    <text evidence="1">Binds 1 [4Fe-4S] cluster per subunit. The cluster is presumably bound at the interface of two monomers.</text>
</comment>
<comment type="subunit">
    <text evidence="1">Homodimer.</text>
</comment>
<comment type="similarity">
    <text evidence="1">Belongs to the NfuA family.</text>
</comment>
<reference key="1">
    <citation type="journal article" date="2009" name="J. Bacteriol.">
        <title>Complete genome sequence and comparative genome analysis of enteropathogenic Escherichia coli O127:H6 strain E2348/69.</title>
        <authorList>
            <person name="Iguchi A."/>
            <person name="Thomson N.R."/>
            <person name="Ogura Y."/>
            <person name="Saunders D."/>
            <person name="Ooka T."/>
            <person name="Henderson I.R."/>
            <person name="Harris D."/>
            <person name="Asadulghani M."/>
            <person name="Kurokawa K."/>
            <person name="Dean P."/>
            <person name="Kenny B."/>
            <person name="Quail M.A."/>
            <person name="Thurston S."/>
            <person name="Dougan G."/>
            <person name="Hayashi T."/>
            <person name="Parkhill J."/>
            <person name="Frankel G."/>
        </authorList>
    </citation>
    <scope>NUCLEOTIDE SEQUENCE [LARGE SCALE GENOMIC DNA]</scope>
    <source>
        <strain>E2348/69 / EPEC</strain>
    </source>
</reference>
<accession>B7UKB9</accession>
<protein>
    <recommendedName>
        <fullName evidence="1">Fe/S biogenesis protein NfuA</fullName>
    </recommendedName>
</protein>
<organism>
    <name type="scientific">Escherichia coli O127:H6 (strain E2348/69 / EPEC)</name>
    <dbReference type="NCBI Taxonomy" id="574521"/>
    <lineage>
        <taxon>Bacteria</taxon>
        <taxon>Pseudomonadati</taxon>
        <taxon>Pseudomonadota</taxon>
        <taxon>Gammaproteobacteria</taxon>
        <taxon>Enterobacterales</taxon>
        <taxon>Enterobacteriaceae</taxon>
        <taxon>Escherichia</taxon>
    </lineage>
</organism>